<sequence>MNTEAAGKRVHVIQGEFKVVNDPHIVLSTILGSCVAACLRDPVTGVGGMNHFLLPGSASSPSSGADATRYGVHLMELLINGLLKQGARRDRLEAKIFGGARTIARFSNVGEQNAAFARRFLMDEGIRIVGESTGGDHGRKLEYWPSSGRARQYALTGVEAQRAMQMDQRPAAPKPVESSIEFF</sequence>
<name>CHED_SINMW</name>
<feature type="chain" id="PRO_1000068560" description="Probable chemoreceptor glutamine deamidase CheD">
    <location>
        <begin position="1"/>
        <end position="183"/>
    </location>
</feature>
<organism>
    <name type="scientific">Sinorhizobium medicae (strain WSM419)</name>
    <name type="common">Ensifer medicae</name>
    <dbReference type="NCBI Taxonomy" id="366394"/>
    <lineage>
        <taxon>Bacteria</taxon>
        <taxon>Pseudomonadati</taxon>
        <taxon>Pseudomonadota</taxon>
        <taxon>Alphaproteobacteria</taxon>
        <taxon>Hyphomicrobiales</taxon>
        <taxon>Rhizobiaceae</taxon>
        <taxon>Sinorhizobium/Ensifer group</taxon>
        <taxon>Sinorhizobium</taxon>
    </lineage>
</organism>
<dbReference type="EC" id="3.5.1.44" evidence="1"/>
<dbReference type="EMBL" id="CP000738">
    <property type="protein sequence ID" value="ABR59099.1"/>
    <property type="molecule type" value="Genomic_DNA"/>
</dbReference>
<dbReference type="RefSeq" id="WP_011974450.1">
    <property type="nucleotide sequence ID" value="NC_009636.1"/>
</dbReference>
<dbReference type="RefSeq" id="YP_001325934.1">
    <property type="nucleotide sequence ID" value="NC_009636.1"/>
</dbReference>
<dbReference type="SMR" id="A6U619"/>
<dbReference type="STRING" id="366394.Smed_0240"/>
<dbReference type="GeneID" id="61613080"/>
<dbReference type="KEGG" id="smd:Smed_0240"/>
<dbReference type="PATRIC" id="fig|366394.8.peg.3306"/>
<dbReference type="eggNOG" id="COG1871">
    <property type="taxonomic scope" value="Bacteria"/>
</dbReference>
<dbReference type="HOGENOM" id="CLU_087854_0_1_5"/>
<dbReference type="OrthoDB" id="9807202at2"/>
<dbReference type="Proteomes" id="UP000001108">
    <property type="component" value="Chromosome"/>
</dbReference>
<dbReference type="GO" id="GO:0050568">
    <property type="term" value="F:protein-glutamine glutaminase activity"/>
    <property type="evidence" value="ECO:0007669"/>
    <property type="project" value="UniProtKB-UniRule"/>
</dbReference>
<dbReference type="GO" id="GO:0006935">
    <property type="term" value="P:chemotaxis"/>
    <property type="evidence" value="ECO:0007669"/>
    <property type="project" value="UniProtKB-UniRule"/>
</dbReference>
<dbReference type="CDD" id="cd16352">
    <property type="entry name" value="CheD"/>
    <property type="match status" value="1"/>
</dbReference>
<dbReference type="FunFam" id="3.30.1330.200:FF:000001">
    <property type="entry name" value="Probable chemoreceptor glutamine deamidase CheD"/>
    <property type="match status" value="1"/>
</dbReference>
<dbReference type="Gene3D" id="3.30.1330.200">
    <property type="match status" value="1"/>
</dbReference>
<dbReference type="HAMAP" id="MF_01440">
    <property type="entry name" value="CheD"/>
    <property type="match status" value="1"/>
</dbReference>
<dbReference type="InterPro" id="IPR038592">
    <property type="entry name" value="CheD-like_sf"/>
</dbReference>
<dbReference type="InterPro" id="IPR005659">
    <property type="entry name" value="Chemorcpt_Glu_NH3ase_CheD"/>
</dbReference>
<dbReference type="InterPro" id="IPR011324">
    <property type="entry name" value="Cytotoxic_necrot_fac-like_cat"/>
</dbReference>
<dbReference type="NCBIfam" id="NF010019">
    <property type="entry name" value="PRK13497.1"/>
    <property type="match status" value="1"/>
</dbReference>
<dbReference type="PANTHER" id="PTHR35147">
    <property type="entry name" value="CHEMORECEPTOR GLUTAMINE DEAMIDASE CHED-RELATED"/>
    <property type="match status" value="1"/>
</dbReference>
<dbReference type="PANTHER" id="PTHR35147:SF2">
    <property type="entry name" value="CHEMORECEPTOR GLUTAMINE DEAMIDASE CHED-RELATED"/>
    <property type="match status" value="1"/>
</dbReference>
<dbReference type="Pfam" id="PF03975">
    <property type="entry name" value="CheD"/>
    <property type="match status" value="1"/>
</dbReference>
<dbReference type="SUPFAM" id="SSF64438">
    <property type="entry name" value="CNF1/YfiH-like putative cysteine hydrolases"/>
    <property type="match status" value="1"/>
</dbReference>
<protein>
    <recommendedName>
        <fullName evidence="1">Probable chemoreceptor glutamine deamidase CheD</fullName>
        <ecNumber evidence="1">3.5.1.44</ecNumber>
    </recommendedName>
</protein>
<proteinExistence type="inferred from homology"/>
<accession>A6U619</accession>
<comment type="function">
    <text evidence="1">Probably deamidates glutamine residues to glutamate on methyl-accepting chemotaxis receptors (MCPs), playing an important role in chemotaxis.</text>
</comment>
<comment type="catalytic activity">
    <reaction evidence="1">
        <text>L-glutaminyl-[protein] + H2O = L-glutamyl-[protein] + NH4(+)</text>
        <dbReference type="Rhea" id="RHEA:16441"/>
        <dbReference type="Rhea" id="RHEA-COMP:10207"/>
        <dbReference type="Rhea" id="RHEA-COMP:10208"/>
        <dbReference type="ChEBI" id="CHEBI:15377"/>
        <dbReference type="ChEBI" id="CHEBI:28938"/>
        <dbReference type="ChEBI" id="CHEBI:29973"/>
        <dbReference type="ChEBI" id="CHEBI:30011"/>
        <dbReference type="EC" id="3.5.1.44"/>
    </reaction>
</comment>
<comment type="similarity">
    <text evidence="1">Belongs to the CheD family.</text>
</comment>
<gene>
    <name evidence="1" type="primary">cheD</name>
    <name type="ordered locus">Smed_0240</name>
</gene>
<keyword id="KW-0145">Chemotaxis</keyword>
<keyword id="KW-0378">Hydrolase</keyword>
<reference key="1">
    <citation type="submission" date="2007-06" db="EMBL/GenBank/DDBJ databases">
        <title>Complete sequence of Sinorhizobium medicae WSM419 chromosome.</title>
        <authorList>
            <consortium name="US DOE Joint Genome Institute"/>
            <person name="Copeland A."/>
            <person name="Lucas S."/>
            <person name="Lapidus A."/>
            <person name="Barry K."/>
            <person name="Glavina del Rio T."/>
            <person name="Dalin E."/>
            <person name="Tice H."/>
            <person name="Pitluck S."/>
            <person name="Chain P."/>
            <person name="Malfatti S."/>
            <person name="Shin M."/>
            <person name="Vergez L."/>
            <person name="Schmutz J."/>
            <person name="Larimer F."/>
            <person name="Land M."/>
            <person name="Hauser L."/>
            <person name="Kyrpides N."/>
            <person name="Mikhailova N."/>
            <person name="Reeve W.G."/>
            <person name="Richardson P."/>
        </authorList>
    </citation>
    <scope>NUCLEOTIDE SEQUENCE [LARGE SCALE GENOMIC DNA]</scope>
    <source>
        <strain>WSM419</strain>
    </source>
</reference>
<evidence type="ECO:0000255" key="1">
    <source>
        <dbReference type="HAMAP-Rule" id="MF_01440"/>
    </source>
</evidence>